<organism>
    <name type="scientific">Xanthomonas oryzae pv. oryzae (strain MAFF 311018)</name>
    <dbReference type="NCBI Taxonomy" id="342109"/>
    <lineage>
        <taxon>Bacteria</taxon>
        <taxon>Pseudomonadati</taxon>
        <taxon>Pseudomonadota</taxon>
        <taxon>Gammaproteobacteria</taxon>
        <taxon>Lysobacterales</taxon>
        <taxon>Lysobacteraceae</taxon>
        <taxon>Xanthomonas</taxon>
    </lineage>
</organism>
<reference key="1">
    <citation type="journal article" date="2005" name="Jpn. Agric. Res. Q.">
        <title>Genome sequence of Xanthomonas oryzae pv. oryzae suggests contribution of large numbers of effector genes and insertion sequences to its race diversity.</title>
        <authorList>
            <person name="Ochiai H."/>
            <person name="Inoue Y."/>
            <person name="Takeya M."/>
            <person name="Sasaki A."/>
            <person name="Kaku H."/>
        </authorList>
    </citation>
    <scope>NUCLEOTIDE SEQUENCE [LARGE SCALE GENOMIC DNA]</scope>
    <source>
        <strain>MAFF 311018</strain>
    </source>
</reference>
<gene>
    <name evidence="1" type="primary">fabZ</name>
    <name type="ordered locus">XOO1856</name>
</gene>
<name>FABZ_XANOM</name>
<keyword id="KW-0963">Cytoplasm</keyword>
<keyword id="KW-0441">Lipid A biosynthesis</keyword>
<keyword id="KW-0444">Lipid biosynthesis</keyword>
<keyword id="KW-0443">Lipid metabolism</keyword>
<keyword id="KW-0456">Lyase</keyword>
<sequence>MSHPAYELPIDVNQIQALIPHRYPFLLIDRVIELDLEAKRIVGQKNVSINEPFFQGHFPTRPVMPGVLIIEALAQAGGVMTQLGLGRDALSKLFYMVKVDNARFNKQVVPGDVLILEVQMKRLIRNMGCYYGEAKVNGEIVASAEIMCAAARE</sequence>
<dbReference type="EC" id="4.2.1.59" evidence="1"/>
<dbReference type="EMBL" id="AP008229">
    <property type="protein sequence ID" value="BAE68611.1"/>
    <property type="molecule type" value="Genomic_DNA"/>
</dbReference>
<dbReference type="RefSeq" id="WP_011258690.1">
    <property type="nucleotide sequence ID" value="NC_007705.1"/>
</dbReference>
<dbReference type="SMR" id="Q2P4B6"/>
<dbReference type="KEGG" id="xom:XOO1856"/>
<dbReference type="HOGENOM" id="CLU_078912_1_0_6"/>
<dbReference type="GO" id="GO:0005737">
    <property type="term" value="C:cytoplasm"/>
    <property type="evidence" value="ECO:0007669"/>
    <property type="project" value="UniProtKB-SubCell"/>
</dbReference>
<dbReference type="GO" id="GO:0016020">
    <property type="term" value="C:membrane"/>
    <property type="evidence" value="ECO:0007669"/>
    <property type="project" value="GOC"/>
</dbReference>
<dbReference type="GO" id="GO:0019171">
    <property type="term" value="F:(3R)-hydroxyacyl-[acyl-carrier-protein] dehydratase activity"/>
    <property type="evidence" value="ECO:0007669"/>
    <property type="project" value="UniProtKB-EC"/>
</dbReference>
<dbReference type="GO" id="GO:0006633">
    <property type="term" value="P:fatty acid biosynthetic process"/>
    <property type="evidence" value="ECO:0007669"/>
    <property type="project" value="UniProtKB-UniRule"/>
</dbReference>
<dbReference type="GO" id="GO:0009245">
    <property type="term" value="P:lipid A biosynthetic process"/>
    <property type="evidence" value="ECO:0007669"/>
    <property type="project" value="UniProtKB-UniRule"/>
</dbReference>
<dbReference type="CDD" id="cd01288">
    <property type="entry name" value="FabZ"/>
    <property type="match status" value="1"/>
</dbReference>
<dbReference type="FunFam" id="3.10.129.10:FF:000001">
    <property type="entry name" value="3-hydroxyacyl-[acyl-carrier-protein] dehydratase FabZ"/>
    <property type="match status" value="1"/>
</dbReference>
<dbReference type="Gene3D" id="3.10.129.10">
    <property type="entry name" value="Hotdog Thioesterase"/>
    <property type="match status" value="1"/>
</dbReference>
<dbReference type="HAMAP" id="MF_00406">
    <property type="entry name" value="FabZ"/>
    <property type="match status" value="1"/>
</dbReference>
<dbReference type="InterPro" id="IPR013114">
    <property type="entry name" value="FabA_FabZ"/>
</dbReference>
<dbReference type="InterPro" id="IPR010084">
    <property type="entry name" value="FabZ"/>
</dbReference>
<dbReference type="InterPro" id="IPR029069">
    <property type="entry name" value="HotDog_dom_sf"/>
</dbReference>
<dbReference type="NCBIfam" id="TIGR01750">
    <property type="entry name" value="fabZ"/>
    <property type="match status" value="1"/>
</dbReference>
<dbReference type="NCBIfam" id="NF000582">
    <property type="entry name" value="PRK00006.1"/>
    <property type="match status" value="1"/>
</dbReference>
<dbReference type="PANTHER" id="PTHR30272">
    <property type="entry name" value="3-HYDROXYACYL-[ACYL-CARRIER-PROTEIN] DEHYDRATASE"/>
    <property type="match status" value="1"/>
</dbReference>
<dbReference type="PANTHER" id="PTHR30272:SF1">
    <property type="entry name" value="3-HYDROXYACYL-[ACYL-CARRIER-PROTEIN] DEHYDRATASE"/>
    <property type="match status" value="1"/>
</dbReference>
<dbReference type="Pfam" id="PF07977">
    <property type="entry name" value="FabA"/>
    <property type="match status" value="1"/>
</dbReference>
<dbReference type="SUPFAM" id="SSF54637">
    <property type="entry name" value="Thioesterase/thiol ester dehydrase-isomerase"/>
    <property type="match status" value="1"/>
</dbReference>
<comment type="function">
    <text evidence="1">Involved in unsaturated fatty acids biosynthesis. Catalyzes the dehydration of short chain beta-hydroxyacyl-ACPs and long chain saturated and unsaturated beta-hydroxyacyl-ACPs.</text>
</comment>
<comment type="catalytic activity">
    <reaction evidence="1">
        <text>a (3R)-hydroxyacyl-[ACP] = a (2E)-enoyl-[ACP] + H2O</text>
        <dbReference type="Rhea" id="RHEA:13097"/>
        <dbReference type="Rhea" id="RHEA-COMP:9925"/>
        <dbReference type="Rhea" id="RHEA-COMP:9945"/>
        <dbReference type="ChEBI" id="CHEBI:15377"/>
        <dbReference type="ChEBI" id="CHEBI:78784"/>
        <dbReference type="ChEBI" id="CHEBI:78827"/>
        <dbReference type="EC" id="4.2.1.59"/>
    </reaction>
</comment>
<comment type="subcellular location">
    <subcellularLocation>
        <location evidence="1">Cytoplasm</location>
    </subcellularLocation>
</comment>
<comment type="similarity">
    <text evidence="1">Belongs to the thioester dehydratase family. FabZ subfamily.</text>
</comment>
<protein>
    <recommendedName>
        <fullName evidence="1">3-hydroxyacyl-[acyl-carrier-protein] dehydratase FabZ</fullName>
        <ecNumber evidence="1">4.2.1.59</ecNumber>
    </recommendedName>
    <alternativeName>
        <fullName evidence="1">(3R)-hydroxymyristoyl-[acyl-carrier-protein] dehydratase</fullName>
        <shortName evidence="1">(3R)-hydroxymyristoyl-ACP dehydrase</shortName>
    </alternativeName>
    <alternativeName>
        <fullName evidence="1">Beta-hydroxyacyl-ACP dehydratase</fullName>
    </alternativeName>
</protein>
<feature type="chain" id="PRO_0000230852" description="3-hydroxyacyl-[acyl-carrier-protein] dehydratase FabZ">
    <location>
        <begin position="1"/>
        <end position="153"/>
    </location>
</feature>
<feature type="active site" evidence="1">
    <location>
        <position position="57"/>
    </location>
</feature>
<accession>Q2P4B6</accession>
<proteinExistence type="inferred from homology"/>
<evidence type="ECO:0000255" key="1">
    <source>
        <dbReference type="HAMAP-Rule" id="MF_00406"/>
    </source>
</evidence>